<comment type="function">
    <text evidence="1">Acts as a chaperone.</text>
</comment>
<comment type="induction">
    <text evidence="1">By stress conditions e.g. heat shock.</text>
</comment>
<comment type="similarity">
    <text evidence="1">Belongs to the heat shock protein 70 family.</text>
</comment>
<sequence>MSRAVGIDLGTTNSVVAVLEGGEPNVIANAEGLRTTPSVVAFSRDGEVLVGDTAKRQAVTNVDNTISSVKRHIGTDWTKQIGDKKYTPQEISARILSKLKRDAEQYLGEKVTDAVITVPAYFNDAERQATKEAGEIAGLNVLRIINEPTAAALAYGLDKGKEDELILVFDLGGGTFDVSLLEVGKDDDFSTIQVRATSGDNRLGGDDWDQRIIDWLVDDFRKTTGVDLSSDKIAMQRLREASEQAKKELSSATSANIQLPYISLTESGPVNMDTTITRAQFEKMTEDLLERTKNPFRDVLKEAGVSVDKISHVVLVGGSTRMPAVSDLVKRETGKEPNKGVNPDEVVAVGAALQAGVLRGERKDVLLIDVTPLSLGIETKGGIMTKLIERNTAIPTKRSEVFTTAEDNQPSVSIQVFQGERELTQDNKNLGTFELTGIAPAPRGLPQIEVTFDIDANGIVHVSAKDKGTGKEQSMTITGGSGLSQDEIDRMIKEAEEHAAEDKNRRARVDQKNQAEQMVYTAEKLIGDNAKVNEEAKKELQADIDSLKSAIQADDHDLIKAGTDKLLASQQKFAQSVYETTKDDPKEQVVDAEVVDEDSGSSK</sequence>
<evidence type="ECO:0000255" key="1">
    <source>
        <dbReference type="HAMAP-Rule" id="MF_00332"/>
    </source>
</evidence>
<evidence type="ECO:0000256" key="2">
    <source>
        <dbReference type="SAM" id="MobiDB-lite"/>
    </source>
</evidence>
<keyword id="KW-0067">ATP-binding</keyword>
<keyword id="KW-0143">Chaperone</keyword>
<keyword id="KW-0547">Nucleotide-binding</keyword>
<keyword id="KW-0597">Phosphoprotein</keyword>
<keyword id="KW-1185">Reference proteome</keyword>
<keyword id="KW-0346">Stress response</keyword>
<gene>
    <name evidence="1" type="primary">dnaK</name>
    <name type="ordered locus">TWT_750</name>
</gene>
<dbReference type="EMBL" id="AE014184">
    <property type="protein sequence ID" value="AAO44847.1"/>
    <property type="molecule type" value="Genomic_DNA"/>
</dbReference>
<dbReference type="RefSeq" id="WP_011096699.1">
    <property type="nucleotide sequence ID" value="NC_004572.3"/>
</dbReference>
<dbReference type="SMR" id="P64409"/>
<dbReference type="STRING" id="203267.TWT_750"/>
<dbReference type="GeneID" id="67388543"/>
<dbReference type="KEGG" id="twh:TWT_750"/>
<dbReference type="eggNOG" id="COG0443">
    <property type="taxonomic scope" value="Bacteria"/>
</dbReference>
<dbReference type="HOGENOM" id="CLU_005965_2_1_11"/>
<dbReference type="OrthoDB" id="9766019at2"/>
<dbReference type="Proteomes" id="UP000002200">
    <property type="component" value="Chromosome"/>
</dbReference>
<dbReference type="GO" id="GO:0005524">
    <property type="term" value="F:ATP binding"/>
    <property type="evidence" value="ECO:0007669"/>
    <property type="project" value="UniProtKB-UniRule"/>
</dbReference>
<dbReference type="GO" id="GO:0140662">
    <property type="term" value="F:ATP-dependent protein folding chaperone"/>
    <property type="evidence" value="ECO:0007669"/>
    <property type="project" value="InterPro"/>
</dbReference>
<dbReference type="GO" id="GO:0051082">
    <property type="term" value="F:unfolded protein binding"/>
    <property type="evidence" value="ECO:0007669"/>
    <property type="project" value="InterPro"/>
</dbReference>
<dbReference type="CDD" id="cd10234">
    <property type="entry name" value="ASKHA_NBD_HSP70_DnaK-like"/>
    <property type="match status" value="1"/>
</dbReference>
<dbReference type="FunFam" id="2.60.34.10:FF:000014">
    <property type="entry name" value="Chaperone protein DnaK HSP70"/>
    <property type="match status" value="1"/>
</dbReference>
<dbReference type="FunFam" id="1.20.1270.10:FF:000001">
    <property type="entry name" value="Molecular chaperone DnaK"/>
    <property type="match status" value="1"/>
</dbReference>
<dbReference type="FunFam" id="3.30.420.40:FF:000071">
    <property type="entry name" value="Molecular chaperone DnaK"/>
    <property type="match status" value="1"/>
</dbReference>
<dbReference type="FunFam" id="3.90.640.10:FF:000003">
    <property type="entry name" value="Molecular chaperone DnaK"/>
    <property type="match status" value="1"/>
</dbReference>
<dbReference type="Gene3D" id="1.20.1270.10">
    <property type="match status" value="1"/>
</dbReference>
<dbReference type="Gene3D" id="3.30.420.40">
    <property type="match status" value="2"/>
</dbReference>
<dbReference type="Gene3D" id="3.90.640.10">
    <property type="entry name" value="Actin, Chain A, domain 4"/>
    <property type="match status" value="1"/>
</dbReference>
<dbReference type="Gene3D" id="2.60.34.10">
    <property type="entry name" value="Substrate Binding Domain Of DNAk, Chain A, domain 1"/>
    <property type="match status" value="1"/>
</dbReference>
<dbReference type="HAMAP" id="MF_00332">
    <property type="entry name" value="DnaK"/>
    <property type="match status" value="1"/>
</dbReference>
<dbReference type="InterPro" id="IPR043129">
    <property type="entry name" value="ATPase_NBD"/>
</dbReference>
<dbReference type="InterPro" id="IPR012725">
    <property type="entry name" value="Chaperone_DnaK"/>
</dbReference>
<dbReference type="InterPro" id="IPR018181">
    <property type="entry name" value="Heat_shock_70_CS"/>
</dbReference>
<dbReference type="InterPro" id="IPR029048">
    <property type="entry name" value="HSP70_C_sf"/>
</dbReference>
<dbReference type="InterPro" id="IPR029047">
    <property type="entry name" value="HSP70_peptide-bd_sf"/>
</dbReference>
<dbReference type="InterPro" id="IPR013126">
    <property type="entry name" value="Hsp_70_fam"/>
</dbReference>
<dbReference type="NCBIfam" id="NF001413">
    <property type="entry name" value="PRK00290.1"/>
    <property type="match status" value="1"/>
</dbReference>
<dbReference type="NCBIfam" id="TIGR02350">
    <property type="entry name" value="prok_dnaK"/>
    <property type="match status" value="1"/>
</dbReference>
<dbReference type="PANTHER" id="PTHR19375">
    <property type="entry name" value="HEAT SHOCK PROTEIN 70KDA"/>
    <property type="match status" value="1"/>
</dbReference>
<dbReference type="Pfam" id="PF00012">
    <property type="entry name" value="HSP70"/>
    <property type="match status" value="2"/>
</dbReference>
<dbReference type="PRINTS" id="PR00301">
    <property type="entry name" value="HEATSHOCK70"/>
</dbReference>
<dbReference type="SUPFAM" id="SSF53067">
    <property type="entry name" value="Actin-like ATPase domain"/>
    <property type="match status" value="2"/>
</dbReference>
<dbReference type="SUPFAM" id="SSF100920">
    <property type="entry name" value="Heat shock protein 70kD (HSP70), peptide-binding domain"/>
    <property type="match status" value="1"/>
</dbReference>
<dbReference type="PROSITE" id="PS00297">
    <property type="entry name" value="HSP70_1"/>
    <property type="match status" value="1"/>
</dbReference>
<dbReference type="PROSITE" id="PS00329">
    <property type="entry name" value="HSP70_2"/>
    <property type="match status" value="1"/>
</dbReference>
<dbReference type="PROSITE" id="PS01036">
    <property type="entry name" value="HSP70_3"/>
    <property type="match status" value="1"/>
</dbReference>
<feature type="chain" id="PRO_0000078578" description="Chaperone protein DnaK">
    <location>
        <begin position="1"/>
        <end position="603"/>
    </location>
</feature>
<feature type="region of interest" description="Disordered" evidence="2">
    <location>
        <begin position="578"/>
        <end position="603"/>
    </location>
</feature>
<feature type="compositionally biased region" description="Basic and acidic residues" evidence="2">
    <location>
        <begin position="580"/>
        <end position="589"/>
    </location>
</feature>
<feature type="compositionally biased region" description="Acidic residues" evidence="2">
    <location>
        <begin position="593"/>
        <end position="603"/>
    </location>
</feature>
<feature type="modified residue" description="Phosphothreonine; by autocatalysis" evidence="1">
    <location>
        <position position="175"/>
    </location>
</feature>
<protein>
    <recommendedName>
        <fullName evidence="1">Chaperone protein DnaK</fullName>
    </recommendedName>
    <alternativeName>
        <fullName evidence="1">HSP70</fullName>
    </alternativeName>
    <alternativeName>
        <fullName evidence="1">Heat shock 70 kDa protein</fullName>
    </alternativeName>
    <alternativeName>
        <fullName evidence="1">Heat shock protein 70</fullName>
    </alternativeName>
</protein>
<proteinExistence type="inferred from homology"/>
<name>DNAK_TROWT</name>
<accession>P64409</accession>
<accession>Q83MQ0</accession>
<accession>Q83N74</accession>
<reference key="1">
    <citation type="journal article" date="2003" name="Genome Res.">
        <title>Tropheryma whipplei twist: a human pathogenic Actinobacteria with a reduced genome.</title>
        <authorList>
            <person name="Raoult D."/>
            <person name="Ogata H."/>
            <person name="Audic S."/>
            <person name="Robert C."/>
            <person name="Suhre K."/>
            <person name="Drancourt M."/>
            <person name="Claverie J.-M."/>
        </authorList>
    </citation>
    <scope>NUCLEOTIDE SEQUENCE [LARGE SCALE GENOMIC DNA]</scope>
    <source>
        <strain>Twist</strain>
    </source>
</reference>
<organism>
    <name type="scientific">Tropheryma whipplei (strain Twist)</name>
    <name type="common">Whipple's bacillus</name>
    <dbReference type="NCBI Taxonomy" id="203267"/>
    <lineage>
        <taxon>Bacteria</taxon>
        <taxon>Bacillati</taxon>
        <taxon>Actinomycetota</taxon>
        <taxon>Actinomycetes</taxon>
        <taxon>Micrococcales</taxon>
        <taxon>Tropherymataceae</taxon>
        <taxon>Tropheryma</taxon>
    </lineage>
</organism>